<sequence length="122" mass="13863">MARISGVDLPREKRIEIGLTYVYGIGRVSSNRILAKAGVNPDTRVRDLTDEEVAKIRDVIDETMLVEGDLRREIALNIKRLQEIGCYRGIRHRKGLPVRGQKTKTNARTRKGPKRTVANKKK</sequence>
<proteinExistence type="inferred from homology"/>
<comment type="function">
    <text evidence="1">Located at the top of the head of the 30S subunit, it contacts several helices of the 16S rRNA. In the 70S ribosome it contacts the 23S rRNA (bridge B1a) and protein L5 of the 50S subunit (bridge B1b), connecting the 2 subunits; these bridges are implicated in subunit movement. Contacts the tRNAs in the A and P-sites.</text>
</comment>
<comment type="subunit">
    <text evidence="1">Part of the 30S ribosomal subunit. Forms a loose heterodimer with protein S19. Forms two bridges to the 50S subunit in the 70S ribosome.</text>
</comment>
<comment type="similarity">
    <text evidence="1">Belongs to the universal ribosomal protein uS13 family.</text>
</comment>
<feature type="chain" id="PRO_1000086235" description="Small ribosomal subunit protein uS13">
    <location>
        <begin position="1"/>
        <end position="122"/>
    </location>
</feature>
<feature type="region of interest" description="Disordered" evidence="2">
    <location>
        <begin position="95"/>
        <end position="122"/>
    </location>
</feature>
<protein>
    <recommendedName>
        <fullName evidence="1">Small ribosomal subunit protein uS13</fullName>
    </recommendedName>
    <alternativeName>
        <fullName evidence="3">30S ribosomal protein S13</fullName>
    </alternativeName>
</protein>
<evidence type="ECO:0000255" key="1">
    <source>
        <dbReference type="HAMAP-Rule" id="MF_01315"/>
    </source>
</evidence>
<evidence type="ECO:0000256" key="2">
    <source>
        <dbReference type="SAM" id="MobiDB-lite"/>
    </source>
</evidence>
<evidence type="ECO:0000305" key="3"/>
<dbReference type="EMBL" id="CP000885">
    <property type="protein sequence ID" value="ABX43989.1"/>
    <property type="molecule type" value="Genomic_DNA"/>
</dbReference>
<dbReference type="RefSeq" id="WP_012201637.1">
    <property type="nucleotide sequence ID" value="NC_010001.1"/>
</dbReference>
<dbReference type="SMR" id="A9KJG9"/>
<dbReference type="STRING" id="357809.Cphy_3642"/>
<dbReference type="KEGG" id="cpy:Cphy_3642"/>
<dbReference type="eggNOG" id="COG0099">
    <property type="taxonomic scope" value="Bacteria"/>
</dbReference>
<dbReference type="HOGENOM" id="CLU_103849_1_2_9"/>
<dbReference type="OrthoDB" id="9803610at2"/>
<dbReference type="Proteomes" id="UP000000370">
    <property type="component" value="Chromosome"/>
</dbReference>
<dbReference type="GO" id="GO:0005829">
    <property type="term" value="C:cytosol"/>
    <property type="evidence" value="ECO:0007669"/>
    <property type="project" value="TreeGrafter"/>
</dbReference>
<dbReference type="GO" id="GO:0015935">
    <property type="term" value="C:small ribosomal subunit"/>
    <property type="evidence" value="ECO:0007669"/>
    <property type="project" value="TreeGrafter"/>
</dbReference>
<dbReference type="GO" id="GO:0019843">
    <property type="term" value="F:rRNA binding"/>
    <property type="evidence" value="ECO:0007669"/>
    <property type="project" value="UniProtKB-UniRule"/>
</dbReference>
<dbReference type="GO" id="GO:0003735">
    <property type="term" value="F:structural constituent of ribosome"/>
    <property type="evidence" value="ECO:0007669"/>
    <property type="project" value="InterPro"/>
</dbReference>
<dbReference type="GO" id="GO:0000049">
    <property type="term" value="F:tRNA binding"/>
    <property type="evidence" value="ECO:0007669"/>
    <property type="project" value="UniProtKB-UniRule"/>
</dbReference>
<dbReference type="GO" id="GO:0006412">
    <property type="term" value="P:translation"/>
    <property type="evidence" value="ECO:0007669"/>
    <property type="project" value="UniProtKB-UniRule"/>
</dbReference>
<dbReference type="FunFam" id="1.10.8.50:FF:000001">
    <property type="entry name" value="30S ribosomal protein S13"/>
    <property type="match status" value="1"/>
</dbReference>
<dbReference type="FunFam" id="4.10.910.10:FF:000001">
    <property type="entry name" value="30S ribosomal protein S13"/>
    <property type="match status" value="1"/>
</dbReference>
<dbReference type="Gene3D" id="1.10.8.50">
    <property type="match status" value="1"/>
</dbReference>
<dbReference type="Gene3D" id="4.10.910.10">
    <property type="entry name" value="30s ribosomal protein s13, domain 2"/>
    <property type="match status" value="1"/>
</dbReference>
<dbReference type="HAMAP" id="MF_01315">
    <property type="entry name" value="Ribosomal_uS13"/>
    <property type="match status" value="1"/>
</dbReference>
<dbReference type="InterPro" id="IPR027437">
    <property type="entry name" value="Rbsml_uS13_C"/>
</dbReference>
<dbReference type="InterPro" id="IPR001892">
    <property type="entry name" value="Ribosomal_uS13"/>
</dbReference>
<dbReference type="InterPro" id="IPR010979">
    <property type="entry name" value="Ribosomal_uS13-like_H2TH"/>
</dbReference>
<dbReference type="InterPro" id="IPR019980">
    <property type="entry name" value="Ribosomal_uS13_bac-type"/>
</dbReference>
<dbReference type="InterPro" id="IPR018269">
    <property type="entry name" value="Ribosomal_uS13_CS"/>
</dbReference>
<dbReference type="NCBIfam" id="TIGR03631">
    <property type="entry name" value="uS13_bact"/>
    <property type="match status" value="1"/>
</dbReference>
<dbReference type="PANTHER" id="PTHR10871">
    <property type="entry name" value="30S RIBOSOMAL PROTEIN S13/40S RIBOSOMAL PROTEIN S18"/>
    <property type="match status" value="1"/>
</dbReference>
<dbReference type="PANTHER" id="PTHR10871:SF1">
    <property type="entry name" value="SMALL RIBOSOMAL SUBUNIT PROTEIN US13M"/>
    <property type="match status" value="1"/>
</dbReference>
<dbReference type="Pfam" id="PF00416">
    <property type="entry name" value="Ribosomal_S13"/>
    <property type="match status" value="1"/>
</dbReference>
<dbReference type="PIRSF" id="PIRSF002134">
    <property type="entry name" value="Ribosomal_S13"/>
    <property type="match status" value="1"/>
</dbReference>
<dbReference type="SUPFAM" id="SSF46946">
    <property type="entry name" value="S13-like H2TH domain"/>
    <property type="match status" value="1"/>
</dbReference>
<dbReference type="PROSITE" id="PS00646">
    <property type="entry name" value="RIBOSOMAL_S13_1"/>
    <property type="match status" value="1"/>
</dbReference>
<dbReference type="PROSITE" id="PS50159">
    <property type="entry name" value="RIBOSOMAL_S13_2"/>
    <property type="match status" value="1"/>
</dbReference>
<organism>
    <name type="scientific">Lachnoclostridium phytofermentans (strain ATCC 700394 / DSM 18823 / ISDg)</name>
    <name type="common">Clostridium phytofermentans</name>
    <dbReference type="NCBI Taxonomy" id="357809"/>
    <lineage>
        <taxon>Bacteria</taxon>
        <taxon>Bacillati</taxon>
        <taxon>Bacillota</taxon>
        <taxon>Clostridia</taxon>
        <taxon>Lachnospirales</taxon>
        <taxon>Lachnospiraceae</taxon>
    </lineage>
</organism>
<accession>A9KJG9</accession>
<reference key="1">
    <citation type="submission" date="2007-11" db="EMBL/GenBank/DDBJ databases">
        <title>Complete genome sequence of Clostridium phytofermentans ISDg.</title>
        <authorList>
            <person name="Leschine S.B."/>
            <person name="Warnick T.A."/>
            <person name="Blanchard J.L."/>
            <person name="Schnell D.J."/>
            <person name="Petit E.L."/>
            <person name="LaTouf W.G."/>
            <person name="Copeland A."/>
            <person name="Lucas S."/>
            <person name="Lapidus A."/>
            <person name="Barry K."/>
            <person name="Glavina del Rio T."/>
            <person name="Dalin E."/>
            <person name="Tice H."/>
            <person name="Pitluck S."/>
            <person name="Kiss H."/>
            <person name="Brettin T."/>
            <person name="Bruce D."/>
            <person name="Detter J.C."/>
            <person name="Han C."/>
            <person name="Kuske C."/>
            <person name="Schmutz J."/>
            <person name="Larimer F."/>
            <person name="Land M."/>
            <person name="Hauser L."/>
            <person name="Kyrpides N."/>
            <person name="Kim E.A."/>
            <person name="Richardson P."/>
        </authorList>
    </citation>
    <scope>NUCLEOTIDE SEQUENCE [LARGE SCALE GENOMIC DNA]</scope>
    <source>
        <strain>ATCC 700394 / DSM 18823 / ISDg</strain>
    </source>
</reference>
<name>RS13_LACP7</name>
<gene>
    <name evidence="1" type="primary">rpsM</name>
    <name type="ordered locus">Cphy_3642</name>
</gene>
<keyword id="KW-1185">Reference proteome</keyword>
<keyword id="KW-0687">Ribonucleoprotein</keyword>
<keyword id="KW-0689">Ribosomal protein</keyword>
<keyword id="KW-0694">RNA-binding</keyword>
<keyword id="KW-0699">rRNA-binding</keyword>
<keyword id="KW-0820">tRNA-binding</keyword>